<accession>A8Y9C0</accession>
<sequence length="37" mass="4447">MKIRASVRKICTKCRLIRRRGRIRVICSNPKHKQRQG</sequence>
<proteinExistence type="inferred from homology"/>
<evidence type="ECO:0000255" key="1">
    <source>
        <dbReference type="HAMAP-Rule" id="MF_00251"/>
    </source>
</evidence>
<evidence type="ECO:0000305" key="2"/>
<dbReference type="EMBL" id="AM777385">
    <property type="protein sequence ID" value="CAO86009.1"/>
    <property type="molecule type" value="Genomic_DNA"/>
</dbReference>
<dbReference type="RefSeq" id="YP_001531315.1">
    <property type="nucleotide sequence ID" value="NC_009950.1"/>
</dbReference>
<dbReference type="SMR" id="A8Y9C0"/>
<dbReference type="GeneID" id="5696572"/>
<dbReference type="KEGG" id="lper:5696572"/>
<dbReference type="GO" id="GO:0009507">
    <property type="term" value="C:chloroplast"/>
    <property type="evidence" value="ECO:0007669"/>
    <property type="project" value="UniProtKB-SubCell"/>
</dbReference>
<dbReference type="GO" id="GO:1990904">
    <property type="term" value="C:ribonucleoprotein complex"/>
    <property type="evidence" value="ECO:0007669"/>
    <property type="project" value="UniProtKB-KW"/>
</dbReference>
<dbReference type="GO" id="GO:0005840">
    <property type="term" value="C:ribosome"/>
    <property type="evidence" value="ECO:0007669"/>
    <property type="project" value="UniProtKB-KW"/>
</dbReference>
<dbReference type="GO" id="GO:0003735">
    <property type="term" value="F:structural constituent of ribosome"/>
    <property type="evidence" value="ECO:0007669"/>
    <property type="project" value="InterPro"/>
</dbReference>
<dbReference type="GO" id="GO:0006412">
    <property type="term" value="P:translation"/>
    <property type="evidence" value="ECO:0007669"/>
    <property type="project" value="UniProtKB-UniRule"/>
</dbReference>
<dbReference type="HAMAP" id="MF_00251">
    <property type="entry name" value="Ribosomal_bL36"/>
    <property type="match status" value="1"/>
</dbReference>
<dbReference type="InterPro" id="IPR000473">
    <property type="entry name" value="Ribosomal_bL36"/>
</dbReference>
<dbReference type="InterPro" id="IPR035977">
    <property type="entry name" value="Ribosomal_bL36_sp"/>
</dbReference>
<dbReference type="NCBIfam" id="TIGR01022">
    <property type="entry name" value="rpmJ_bact"/>
    <property type="match status" value="1"/>
</dbReference>
<dbReference type="PANTHER" id="PTHR42888">
    <property type="entry name" value="50S RIBOSOMAL PROTEIN L36, CHLOROPLASTIC"/>
    <property type="match status" value="1"/>
</dbReference>
<dbReference type="PANTHER" id="PTHR42888:SF1">
    <property type="entry name" value="LARGE RIBOSOMAL SUBUNIT PROTEIN BL36C"/>
    <property type="match status" value="1"/>
</dbReference>
<dbReference type="Pfam" id="PF00444">
    <property type="entry name" value="Ribosomal_L36"/>
    <property type="match status" value="1"/>
</dbReference>
<dbReference type="SUPFAM" id="SSF57840">
    <property type="entry name" value="Ribosomal protein L36"/>
    <property type="match status" value="1"/>
</dbReference>
<dbReference type="PROSITE" id="PS00828">
    <property type="entry name" value="RIBOSOMAL_L36"/>
    <property type="match status" value="1"/>
</dbReference>
<geneLocation type="chloroplast"/>
<protein>
    <recommendedName>
        <fullName evidence="1">Large ribosomal subunit protein bL36c</fullName>
    </recommendedName>
    <alternativeName>
        <fullName evidence="2">50S ribosomal protein L36, chloroplastic</fullName>
    </alternativeName>
</protein>
<feature type="chain" id="PRO_0000344769" description="Large ribosomal subunit protein bL36c">
    <location>
        <begin position="1"/>
        <end position="37"/>
    </location>
</feature>
<organism>
    <name type="scientific">Lolium perenne</name>
    <name type="common">Perennial ryegrass</name>
    <dbReference type="NCBI Taxonomy" id="4522"/>
    <lineage>
        <taxon>Eukaryota</taxon>
        <taxon>Viridiplantae</taxon>
        <taxon>Streptophyta</taxon>
        <taxon>Embryophyta</taxon>
        <taxon>Tracheophyta</taxon>
        <taxon>Spermatophyta</taxon>
        <taxon>Magnoliopsida</taxon>
        <taxon>Liliopsida</taxon>
        <taxon>Poales</taxon>
        <taxon>Poaceae</taxon>
        <taxon>BOP clade</taxon>
        <taxon>Pooideae</taxon>
        <taxon>Poodae</taxon>
        <taxon>Poeae</taxon>
        <taxon>Poeae Chloroplast Group 2 (Poeae type)</taxon>
        <taxon>Loliodinae</taxon>
        <taxon>Loliinae</taxon>
        <taxon>Lolium</taxon>
    </lineage>
</organism>
<name>RK36_LOLPR</name>
<gene>
    <name evidence="1" type="primary">rpl36</name>
    <name type="ordered locus">LopeCp075</name>
</gene>
<keyword id="KW-0150">Chloroplast</keyword>
<keyword id="KW-0934">Plastid</keyword>
<keyword id="KW-0687">Ribonucleoprotein</keyword>
<keyword id="KW-0689">Ribosomal protein</keyword>
<comment type="subcellular location">
    <subcellularLocation>
        <location>Plastid</location>
        <location>Chloroplast</location>
    </subcellularLocation>
</comment>
<comment type="similarity">
    <text evidence="1">Belongs to the bacterial ribosomal protein bL36 family.</text>
</comment>
<reference key="1">
    <citation type="journal article" date="2008" name="PLoS ONE">
        <title>An optimized chloroplast DNA extraction protocol for grasses (Poaceae) proves suitable for whole plastid genome sequencing and SNP detection.</title>
        <authorList>
            <person name="Diekmann K."/>
            <person name="Hodkinson T.R."/>
            <person name="Fricke E."/>
            <person name="Barth S."/>
        </authorList>
    </citation>
    <scope>NUCLEOTIDE SEQUENCE [LARGE SCALE GENOMIC DNA]</scope>
    <source>
        <strain>cv. Cashel</strain>
    </source>
</reference>